<feature type="chain" id="PRO_0000221789" description="Fiber protein">
    <location>
        <begin position="1"/>
        <end position="581"/>
    </location>
</feature>
<feature type="repeat" description="Shaft 1">
    <location>
        <begin position="45"/>
        <end position="59"/>
    </location>
</feature>
<feature type="repeat" description="Shaft 2">
    <location>
        <begin position="60"/>
        <end position="75"/>
    </location>
</feature>
<feature type="repeat" description="Shaft 3">
    <location>
        <begin position="76"/>
        <end position="95"/>
    </location>
</feature>
<feature type="repeat" description="Shaft 4">
    <location>
        <begin position="96"/>
        <end position="109"/>
    </location>
</feature>
<feature type="repeat" description="Shaft 5">
    <location>
        <begin position="110"/>
        <end position="124"/>
    </location>
</feature>
<feature type="repeat" description="Shaft 6">
    <location>
        <begin position="125"/>
        <end position="139"/>
    </location>
</feature>
<feature type="repeat" description="Shaft 7">
    <location>
        <begin position="140"/>
        <end position="154"/>
    </location>
</feature>
<feature type="repeat" description="Shaft 8">
    <location>
        <begin position="155"/>
        <end position="170"/>
    </location>
</feature>
<feature type="repeat" description="Shaft 9">
    <location>
        <begin position="171"/>
        <end position="185"/>
    </location>
</feature>
<feature type="repeat" description="Shaft 10">
    <location>
        <begin position="186"/>
        <end position="200"/>
    </location>
</feature>
<feature type="repeat" description="Shaft 11">
    <location>
        <begin position="201"/>
        <end position="217"/>
    </location>
</feature>
<feature type="repeat" description="Shaft 12">
    <location>
        <begin position="218"/>
        <end position="232"/>
    </location>
</feature>
<feature type="repeat" description="Shaft 13">
    <location>
        <begin position="233"/>
        <end position="248"/>
    </location>
</feature>
<feature type="repeat" description="Shaft 14">
    <location>
        <begin position="249"/>
        <end position="265"/>
    </location>
</feature>
<feature type="repeat" description="Shaft 15">
    <location>
        <begin position="266"/>
        <end position="279"/>
    </location>
</feature>
<feature type="repeat" description="Shaft 16">
    <location>
        <begin position="280"/>
        <end position="296"/>
    </location>
</feature>
<feature type="repeat" description="Shaft 17">
    <location>
        <begin position="297"/>
        <end position="316"/>
    </location>
</feature>
<feature type="repeat" description="Shaft 18">
    <location>
        <begin position="317"/>
        <end position="333"/>
    </location>
</feature>
<feature type="repeat" description="Shaft 19">
    <location>
        <begin position="334"/>
        <end position="354"/>
    </location>
</feature>
<feature type="repeat" description="Shaft 20">
    <location>
        <begin position="355"/>
        <end position="370"/>
    </location>
</feature>
<feature type="repeat" description="Shaft 21">
    <location>
        <begin position="371"/>
        <end position="386"/>
    </location>
</feature>
<feature type="repeat" description="Shaft 22">
    <location>
        <begin position="387"/>
        <end position="392"/>
    </location>
</feature>
<feature type="region of interest" description="Tail (penton base attachment)" evidence="1">
    <location>
        <begin position="1"/>
        <end position="44"/>
    </location>
</feature>
<feature type="region of interest" description="Disordered" evidence="2">
    <location>
        <begin position="1"/>
        <end position="23"/>
    </location>
</feature>
<feature type="region of interest" description="Shaft region" evidence="1">
    <location>
        <begin position="45"/>
        <end position="392"/>
    </location>
</feature>
<feature type="region of interest" description="Spacer" evidence="1">
    <location>
        <begin position="393"/>
        <end position="398"/>
    </location>
</feature>
<feature type="region of interest" description="Head" evidence="1">
    <location>
        <begin position="399"/>
        <end position="581"/>
    </location>
</feature>
<feature type="helix" evidence="5">
    <location>
        <begin position="397"/>
        <end position="399"/>
    </location>
</feature>
<feature type="strand" evidence="4">
    <location>
        <begin position="400"/>
        <end position="403"/>
    </location>
</feature>
<feature type="strand" evidence="4">
    <location>
        <begin position="413"/>
        <end position="415"/>
    </location>
</feature>
<feature type="strand" evidence="4">
    <location>
        <begin position="419"/>
        <end position="428"/>
    </location>
</feature>
<feature type="strand" evidence="4">
    <location>
        <begin position="431"/>
        <end position="440"/>
    </location>
</feature>
<feature type="helix" evidence="4">
    <location>
        <begin position="443"/>
        <end position="445"/>
    </location>
</feature>
<feature type="turn" evidence="4">
    <location>
        <begin position="446"/>
        <end position="448"/>
    </location>
</feature>
<feature type="strand" evidence="4">
    <location>
        <begin position="453"/>
        <end position="461"/>
    </location>
</feature>
<feature type="strand" evidence="5">
    <location>
        <begin position="470"/>
        <end position="473"/>
    </location>
</feature>
<feature type="helix" evidence="4">
    <location>
        <begin position="475"/>
        <end position="477"/>
    </location>
</feature>
<feature type="strand" evidence="4">
    <location>
        <begin position="479"/>
        <end position="482"/>
    </location>
</feature>
<feature type="helix" evidence="5">
    <location>
        <begin position="485"/>
        <end position="487"/>
    </location>
</feature>
<feature type="helix" evidence="4">
    <location>
        <begin position="495"/>
        <end position="497"/>
    </location>
</feature>
<feature type="turn" evidence="4">
    <location>
        <begin position="501"/>
        <end position="503"/>
    </location>
</feature>
<feature type="helix" evidence="4">
    <location>
        <begin position="508"/>
        <end position="510"/>
    </location>
</feature>
<feature type="helix" evidence="4">
    <location>
        <begin position="512"/>
        <end position="514"/>
    </location>
</feature>
<feature type="strand" evidence="4">
    <location>
        <begin position="515"/>
        <end position="522"/>
    </location>
</feature>
<feature type="strand" evidence="4">
    <location>
        <begin position="528"/>
        <end position="537"/>
    </location>
</feature>
<feature type="strand" evidence="4">
    <location>
        <begin position="543"/>
        <end position="545"/>
    </location>
</feature>
<feature type="strand" evidence="4">
    <location>
        <begin position="549"/>
        <end position="557"/>
    </location>
</feature>
<feature type="strand" evidence="4">
    <location>
        <begin position="573"/>
        <end position="579"/>
    </location>
</feature>
<comment type="function">
    <text evidence="1">Forms spikes that protrude from each vertex of the icosahedral capsid. Interacts with host coxsackievirus and adenovirus receptor CXADR located at the cell tight junctions to provide virion initial attachment to target cell. The fiber protein binds to CXADR with a higher affinity than CXADR binds to itself, thereby blocking the cell-cell adhesion function of CXADR dimers and leading to local disruption of the tight junction. Fiber protein present on neo-synthesized particles may thus disrupt the junctional integrity in order to facilitate further neighboring cells infection. Fiber proteins are shed during virus entry, when virus is still at the cell surface. Fiber shedding is dependent on viral CXADR drifting motion and subsequent binding to immobile integrins. Heparan sulfate might also play a role in virus binding (By similarity).</text>
</comment>
<comment type="subunit">
    <text evidence="1">Homotrimer; arranged in a triple beta-spiral. Interacts with host receptor CXADR. Interacts (via N-terminal tail region) with pentons (By similarity).</text>
</comment>
<comment type="subcellular location">
    <subcellularLocation>
        <location evidence="1">Virion</location>
    </subcellularLocation>
    <subcellularLocation>
        <location evidence="1">Host nucleus</location>
    </subcellularLocation>
    <text evidence="1">Anchored to the pentons, protrudes from the virion surface. Present in 36 copies per virion (By similarity).</text>
</comment>
<comment type="induction">
    <text>Expressed in the late phase of the viral replicative cycle.</text>
</comment>
<comment type="domain">
    <text evidence="1">The tail region anchors the fiber to penton base capsomers, whereas the shaft, built from several repeated motifs, allows the knob to protrude from the virion.</text>
</comment>
<comment type="PTM">
    <text evidence="1">O-glycosylated; glycans contain N-acetylglucosamine and may play a role in fiber assembly and stabilization.</text>
</comment>
<comment type="miscellaneous">
    <text evidence="1">All late proteins expressed from the major late promoter are produced by alternative splicing and alternative polyadenylation of the same gene giving rise to non-overlapping ORFs. A leader sequence is present in the N-terminus of all these mRNAs and is recognized by the viral shutoff protein to provide expression although conventional translation via ribosome scanning from the cap has been shut off in the host cell (By similarity).</text>
</comment>
<comment type="similarity">
    <text evidence="3">Belongs to the adenoviridae fiber family.</text>
</comment>
<keyword id="KW-0002">3D-structure</keyword>
<keyword id="KW-0167">Capsid protein</keyword>
<keyword id="KW-1048">Host nucleus</keyword>
<keyword id="KW-0945">Host-virus interaction</keyword>
<keyword id="KW-0426">Late protein</keyword>
<keyword id="KW-1185">Reference proteome</keyword>
<keyword id="KW-0677">Repeat</keyword>
<keyword id="KW-1233">Viral attachment to host adhesion receptor</keyword>
<keyword id="KW-1161">Viral attachment to host cell</keyword>
<keyword id="KW-0946">Virion</keyword>
<keyword id="KW-1160">Virus entry into host cell</keyword>
<accession>P11818</accession>
<protein>
    <recommendedName>
        <fullName>Fiber protein</fullName>
        <shortName>SPIKE</shortName>
    </recommendedName>
    <alternativeName>
        <fullName>Protein IV</fullName>
    </alternativeName>
</protein>
<organism>
    <name type="scientific">Human adenovirus C serotype 5</name>
    <name type="common">HAdV-5</name>
    <name type="synonym">Human adenovirus 5</name>
    <dbReference type="NCBI Taxonomy" id="28285"/>
    <lineage>
        <taxon>Viruses</taxon>
        <taxon>Varidnaviria</taxon>
        <taxon>Bamfordvirae</taxon>
        <taxon>Preplasmiviricota</taxon>
        <taxon>Tectiliviricetes</taxon>
        <taxon>Rowavirales</taxon>
        <taxon>Adenoviridae</taxon>
        <taxon>Mastadenovirus</taxon>
        <taxon>Human mastadenovirus C</taxon>
    </lineage>
</organism>
<dbReference type="EMBL" id="M73260">
    <property type="status" value="NOT_ANNOTATED_CDS"/>
    <property type="molecule type" value="Genomic_DNA"/>
</dbReference>
<dbReference type="EMBL" id="M18369">
    <property type="protein sequence ID" value="AAA42504.1"/>
    <property type="molecule type" value="Genomic_DNA"/>
</dbReference>
<dbReference type="PIR" id="A27404">
    <property type="entry name" value="ERADF5"/>
</dbReference>
<dbReference type="RefSeq" id="AP_000226.1">
    <property type="nucleotide sequence ID" value="AC_000008.1"/>
</dbReference>
<dbReference type="PDB" id="1KNB">
    <property type="method" value="X-ray"/>
    <property type="resolution" value="1.70 A"/>
    <property type="chains" value="A=386-581"/>
</dbReference>
<dbReference type="PDB" id="4ATZ">
    <property type="method" value="X-ray"/>
    <property type="resolution" value="1.95 A"/>
    <property type="chains" value="A/B/C=387-581"/>
</dbReference>
<dbReference type="PDBsum" id="1KNB"/>
<dbReference type="PDBsum" id="4ATZ"/>
<dbReference type="SMR" id="P11818"/>
<dbReference type="GlyConnect" id="156">
    <property type="glycosylation" value="1 O-GlcNAc glycan"/>
</dbReference>
<dbReference type="EvolutionaryTrace" id="P11818"/>
<dbReference type="Proteomes" id="UP000004992">
    <property type="component" value="Genome"/>
</dbReference>
<dbReference type="GO" id="GO:0042025">
    <property type="term" value="C:host cell nucleus"/>
    <property type="evidence" value="ECO:0007669"/>
    <property type="project" value="UniProtKB-SubCell"/>
</dbReference>
<dbReference type="GO" id="GO:0098022">
    <property type="term" value="C:viral capsid, fiber"/>
    <property type="evidence" value="ECO:0000315"/>
    <property type="project" value="CACAO"/>
</dbReference>
<dbReference type="GO" id="GO:0098671">
    <property type="term" value="P:adhesion receptor-mediated virion attachment to host cell"/>
    <property type="evidence" value="ECO:0007669"/>
    <property type="project" value="UniProtKB-KW"/>
</dbReference>
<dbReference type="GO" id="GO:0007155">
    <property type="term" value="P:cell adhesion"/>
    <property type="evidence" value="ECO:0007669"/>
    <property type="project" value="InterPro"/>
</dbReference>
<dbReference type="GO" id="GO:0046718">
    <property type="term" value="P:symbiont entry into host cell"/>
    <property type="evidence" value="ECO:0007669"/>
    <property type="project" value="UniProtKB-KW"/>
</dbReference>
<dbReference type="Gene3D" id="6.20.10.20">
    <property type="match status" value="1"/>
</dbReference>
<dbReference type="Gene3D" id="2.60.90.10">
    <property type="entry name" value="Adenovirus pIV-related, attachment domain"/>
    <property type="match status" value="1"/>
</dbReference>
<dbReference type="Gene3D" id="2.10.25.20">
    <property type="entry name" value="reovirus attachment protein sigma1, domain 1"/>
    <property type="match status" value="2"/>
</dbReference>
<dbReference type="InterPro" id="IPR000931">
    <property type="entry name" value="Adeno_fibre"/>
</dbReference>
<dbReference type="InterPro" id="IPR000978">
    <property type="entry name" value="Adeno_fibre_knob"/>
</dbReference>
<dbReference type="InterPro" id="IPR000939">
    <property type="entry name" value="Adenobir_fibre_prot_rpt/shaft"/>
</dbReference>
<dbReference type="InterPro" id="IPR008982">
    <property type="entry name" value="Adenovirus_pIV-like_att"/>
</dbReference>
<dbReference type="InterPro" id="IPR009013">
    <property type="entry name" value="Attachment_protein_shaft_sf"/>
</dbReference>
<dbReference type="Pfam" id="PF00541">
    <property type="entry name" value="Adeno_knob"/>
    <property type="match status" value="1"/>
</dbReference>
<dbReference type="Pfam" id="PF00608">
    <property type="entry name" value="Adeno_shaft"/>
    <property type="match status" value="6"/>
</dbReference>
<dbReference type="PRINTS" id="PR00307">
    <property type="entry name" value="ADENOVSFIBRE"/>
</dbReference>
<dbReference type="SUPFAM" id="SSF51225">
    <property type="entry name" value="Fibre shaft of virus attachment proteins"/>
    <property type="match status" value="4"/>
</dbReference>
<dbReference type="SUPFAM" id="SSF49835">
    <property type="entry name" value="Virus attachment protein globular domain"/>
    <property type="match status" value="1"/>
</dbReference>
<name>SPIKE_ADE05</name>
<proteinExistence type="evidence at protein level"/>
<organismHost>
    <name type="scientific">Homo sapiens</name>
    <name type="common">Human</name>
    <dbReference type="NCBI Taxonomy" id="9606"/>
</organismHost>
<sequence>MKRARPSEDTFNPVYPYDTETGPPTVPFLTPPFVSPNGFQESPPGVLSLRLSEPLVTSNGMLALKMGNGLSLDEAGNLTSQNVTTVSPPLKKTKSNINLEISAPLTVTSEALTVAAAAPLMVAGNTLTMQSQAPLTVHDSKLSIATQGPLTVSEGKLALQTSGPLTTTDSSTLTITASPPLTTATGSLGIDLKEPIYTQNGKLGLKYGAPLHVTDDLNTLTVATGPGVTINNTSLQTKVTGALGFDSQGNMQLNVAGGLRIDSQNRRLILDVSYPFDAQNQLNLRLGQGPLFINSAHNLDINYNKGLYLFTASNNSKKLEVNLSTAKGLMFDATAIAINAGDGLEFGSPNAPNTNPLKTKIGHGLEFDSNKAMVPKLGTGLSFDSTGAITVGNKNNDKLTLWTTPAPSPNCRLNAEKDAKLTLVLTKCGSQILATVSVLAVKGSLAPISGTVQSAHLIIRFDENGVLLNNSFLDPEYWNFRNGDLTEGTAYTNAVGFMPNLSAYPKSHGKTAKSNIVSQVYLNGDKTKPVTLTITLNGTQETGDTTPSAYSMSFSWDWSGHNYINEIFATSSYTFSYIAQE</sequence>
<evidence type="ECO:0000250" key="1"/>
<evidence type="ECO:0000256" key="2">
    <source>
        <dbReference type="SAM" id="MobiDB-lite"/>
    </source>
</evidence>
<evidence type="ECO:0000305" key="3"/>
<evidence type="ECO:0007829" key="4">
    <source>
        <dbReference type="PDB" id="1KNB"/>
    </source>
</evidence>
<evidence type="ECO:0007829" key="5">
    <source>
        <dbReference type="PDB" id="4ATZ"/>
    </source>
</evidence>
<reference key="1">
    <citation type="journal article" date="1987" name="Virology">
        <title>The sequence of adenovirus fiber: similarities and differences between serotypes 2 and 5.</title>
        <authorList>
            <person name="Chroboczek J."/>
            <person name="Jacrot B."/>
        </authorList>
    </citation>
    <scope>NUCLEOTIDE SEQUENCE [GENOMIC DNA]</scope>
</reference>
<reference key="2">
    <citation type="journal article" date="1992" name="Virology">
        <title>The sequence of the genome of adenovirus type 5 and its comparison with the genome of adenovirus type 2.</title>
        <authorList>
            <person name="Chroboczek J."/>
            <person name="Bieber F."/>
            <person name="Jacrot B."/>
        </authorList>
    </citation>
    <scope>NUCLEOTIDE SEQUENCE [GENOMIC DNA]</scope>
</reference>
<reference key="3">
    <citation type="journal article" date="2012" name="Nat. Methods">
        <title>De novo derivation of proteomes from transcriptomes for transcript and protein identification.</title>
        <authorList>
            <person name="Evans V.C."/>
            <person name="Barker G."/>
            <person name="Heesom K.J."/>
            <person name="Fan J."/>
            <person name="Bessant C."/>
            <person name="Matthews D.A."/>
        </authorList>
    </citation>
    <scope>NUCLEOTIDE SEQUENCE [MRNA]</scope>
</reference>
<reference key="4">
    <citation type="journal article" date="1990" name="J. Virol.">
        <title>Relative accessibility of N-acetylglucosamine in trimers of the adenovirus types 2 and 5 fiber proteins.</title>
        <authorList>
            <person name="Mullis K.G."/>
            <person name="Haltiwanger R.S."/>
            <person name="Hart G.W."/>
            <person name="Marchase R.B."/>
            <person name="Engler J.A."/>
        </authorList>
    </citation>
    <scope>GLYCOSYLATION</scope>
</reference>
<reference key="5">
    <citation type="journal article" date="2005" name="J. Virol.">
        <title>Adenovirus receptors.</title>
        <authorList>
            <person name="Zhang Y."/>
            <person name="Bergelson J.M."/>
        </authorList>
    </citation>
    <scope>REVIEW</scope>
</reference>
<reference key="6">
    <citation type="journal article" date="1994" name="Structure">
        <title>Crystal structure of the receptor-binding domain of adenovirus type 5 fiber protein at 1.7-A resolution.</title>
        <authorList>
            <person name="Xia D."/>
            <person name="Henry L.J."/>
            <person name="Gerard R.D."/>
            <person name="Deisenhofer J."/>
        </authorList>
    </citation>
    <scope>X-RAY CRYSTALLOGRAPHY (1.7 ANGSTROMS) OF 386-581</scope>
</reference>
<gene>
    <name type="ORF">L5</name>
</gene>